<sequence>MSIIVNQIVLHQLVKTSQDENTVQLKTHLRDELLPITAETEQMMLQLHQEYQNKTKAYGVFQETSNFAQILNRTLENDIDFLAFSHQSAELLRQELGKYSFANDGTLILCQYNFLATDYLFIALLDSRYSMLVDENLEIKQTHYLDITQFDIACRINLTELHLDAKSTRYLTFIKGRVGRKIADFFMDFLGAEEGLNPQVQNQCLLQAVSDYCQQADLTKEQTQAVKKQVFDYCKGQINVGEEIVVTELSANIPTLNEQSFVDFAVSQNYGLEENIPPVRTALKSLTKFSGSGKGITLSFDAELLNSRIFWDEATDSLTITGLPPNLRDQLQRQTKE</sequence>
<accession>B0UV54</accession>
<organism>
    <name type="scientific">Histophilus somni (strain 2336)</name>
    <name type="common">Haemophilus somnus</name>
    <dbReference type="NCBI Taxonomy" id="228400"/>
    <lineage>
        <taxon>Bacteria</taxon>
        <taxon>Pseudomonadati</taxon>
        <taxon>Pseudomonadota</taxon>
        <taxon>Gammaproteobacteria</taxon>
        <taxon>Pasteurellales</taxon>
        <taxon>Pasteurellaceae</taxon>
        <taxon>Histophilus</taxon>
    </lineage>
</organism>
<reference key="1">
    <citation type="submission" date="2008-02" db="EMBL/GenBank/DDBJ databases">
        <title>Complete sequence of Haemophilus somnus 2336.</title>
        <authorList>
            <consortium name="US DOE Joint Genome Institute"/>
            <person name="Siddaramappa S."/>
            <person name="Duncan A.J."/>
            <person name="Challacombe J.F."/>
            <person name="Rainey D."/>
            <person name="Gillaspy A.F."/>
            <person name="Carson M."/>
            <person name="Gipson J."/>
            <person name="Gipson M."/>
            <person name="Bruce D."/>
            <person name="Detter J.C."/>
            <person name="Han C.S."/>
            <person name="Land M."/>
            <person name="Tapia R."/>
            <person name="Thompson L.S."/>
            <person name="Orvis J."/>
            <person name="Zaitshik J."/>
            <person name="Barnes G."/>
            <person name="Brettin T.S."/>
            <person name="Dyer D.W."/>
            <person name="Inzana T.J."/>
        </authorList>
    </citation>
    <scope>NUCLEOTIDE SEQUENCE [LARGE SCALE GENOMIC DNA]</scope>
    <source>
        <strain>2336</strain>
    </source>
</reference>
<feature type="chain" id="PRO_1000083328" description="Nucleoid-associated protein HSM_0096">
    <location>
        <begin position="1"/>
        <end position="337"/>
    </location>
</feature>
<comment type="subcellular location">
    <subcellularLocation>
        <location evidence="1">Cytoplasm</location>
        <location evidence="1">Nucleoid</location>
    </subcellularLocation>
</comment>
<comment type="similarity">
    <text evidence="1">Belongs to the YejK family.</text>
</comment>
<gene>
    <name type="ordered locus">HSM_0096</name>
</gene>
<proteinExistence type="inferred from homology"/>
<name>NDPA_HISS2</name>
<dbReference type="EMBL" id="CP000947">
    <property type="protein sequence ID" value="ACA32645.1"/>
    <property type="molecule type" value="Genomic_DNA"/>
</dbReference>
<dbReference type="RefSeq" id="WP_012341763.1">
    <property type="nucleotide sequence ID" value="NC_010519.1"/>
</dbReference>
<dbReference type="SMR" id="B0UV54"/>
<dbReference type="STRING" id="228400.HSM_0096"/>
<dbReference type="GeneID" id="31486372"/>
<dbReference type="KEGG" id="hsm:HSM_0096"/>
<dbReference type="HOGENOM" id="CLU_063050_0_1_6"/>
<dbReference type="GO" id="GO:0043590">
    <property type="term" value="C:bacterial nucleoid"/>
    <property type="evidence" value="ECO:0007669"/>
    <property type="project" value="TreeGrafter"/>
</dbReference>
<dbReference type="GO" id="GO:0005737">
    <property type="term" value="C:cytoplasm"/>
    <property type="evidence" value="ECO:0007669"/>
    <property type="project" value="UniProtKB-UniRule"/>
</dbReference>
<dbReference type="GO" id="GO:0003690">
    <property type="term" value="F:double-stranded DNA binding"/>
    <property type="evidence" value="ECO:0007669"/>
    <property type="project" value="TreeGrafter"/>
</dbReference>
<dbReference type="GO" id="GO:0003727">
    <property type="term" value="F:single-stranded RNA binding"/>
    <property type="evidence" value="ECO:0007669"/>
    <property type="project" value="TreeGrafter"/>
</dbReference>
<dbReference type="HAMAP" id="MF_00730">
    <property type="entry name" value="NdpA"/>
    <property type="match status" value="1"/>
</dbReference>
<dbReference type="InterPro" id="IPR007358">
    <property type="entry name" value="Nucleoid_associated_NdpA"/>
</dbReference>
<dbReference type="NCBIfam" id="NF001557">
    <property type="entry name" value="PRK00378.1"/>
    <property type="match status" value="1"/>
</dbReference>
<dbReference type="PANTHER" id="PTHR38772">
    <property type="match status" value="1"/>
</dbReference>
<dbReference type="PANTHER" id="PTHR38772:SF1">
    <property type="entry name" value="NUCLEOID-ASSOCIATED PROTEIN YEJK"/>
    <property type="match status" value="1"/>
</dbReference>
<dbReference type="Pfam" id="PF04245">
    <property type="entry name" value="NA37"/>
    <property type="match status" value="1"/>
</dbReference>
<protein>
    <recommendedName>
        <fullName evidence="1">Nucleoid-associated protein HSM_0096</fullName>
    </recommendedName>
</protein>
<keyword id="KW-0963">Cytoplasm</keyword>
<evidence type="ECO:0000255" key="1">
    <source>
        <dbReference type="HAMAP-Rule" id="MF_00730"/>
    </source>
</evidence>